<dbReference type="EC" id="3.5.1.2" evidence="1"/>
<dbReference type="EMBL" id="AM942759">
    <property type="protein sequence ID" value="CAR40861.1"/>
    <property type="molecule type" value="Genomic_DNA"/>
</dbReference>
<dbReference type="SMR" id="B4EUR1"/>
<dbReference type="EnsemblBacteria" id="CAR40861">
    <property type="protein sequence ID" value="CAR40861"/>
    <property type="gene ID" value="PMI0329"/>
</dbReference>
<dbReference type="GeneID" id="6802190"/>
<dbReference type="KEGG" id="pmr:PMI0329"/>
<dbReference type="eggNOG" id="COG2066">
    <property type="taxonomic scope" value="Bacteria"/>
</dbReference>
<dbReference type="HOGENOM" id="CLU_027932_1_1_6"/>
<dbReference type="Proteomes" id="UP000008319">
    <property type="component" value="Chromosome"/>
</dbReference>
<dbReference type="GO" id="GO:0004359">
    <property type="term" value="F:glutaminase activity"/>
    <property type="evidence" value="ECO:0007669"/>
    <property type="project" value="UniProtKB-UniRule"/>
</dbReference>
<dbReference type="GO" id="GO:0006537">
    <property type="term" value="P:glutamate biosynthetic process"/>
    <property type="evidence" value="ECO:0007669"/>
    <property type="project" value="TreeGrafter"/>
</dbReference>
<dbReference type="GO" id="GO:0006543">
    <property type="term" value="P:glutamine catabolic process"/>
    <property type="evidence" value="ECO:0007669"/>
    <property type="project" value="TreeGrafter"/>
</dbReference>
<dbReference type="FunFam" id="3.40.710.10:FF:000005">
    <property type="entry name" value="Glutaminase"/>
    <property type="match status" value="1"/>
</dbReference>
<dbReference type="Gene3D" id="3.40.710.10">
    <property type="entry name" value="DD-peptidase/beta-lactamase superfamily"/>
    <property type="match status" value="1"/>
</dbReference>
<dbReference type="HAMAP" id="MF_00313">
    <property type="entry name" value="Glutaminase"/>
    <property type="match status" value="1"/>
</dbReference>
<dbReference type="InterPro" id="IPR012338">
    <property type="entry name" value="Beta-lactam/transpept-like"/>
</dbReference>
<dbReference type="InterPro" id="IPR015868">
    <property type="entry name" value="Glutaminase"/>
</dbReference>
<dbReference type="NCBIfam" id="TIGR03814">
    <property type="entry name" value="Gln_ase"/>
    <property type="match status" value="1"/>
</dbReference>
<dbReference type="NCBIfam" id="NF002132">
    <property type="entry name" value="PRK00971.1-1"/>
    <property type="match status" value="1"/>
</dbReference>
<dbReference type="NCBIfam" id="NF002133">
    <property type="entry name" value="PRK00971.1-2"/>
    <property type="match status" value="1"/>
</dbReference>
<dbReference type="PANTHER" id="PTHR12544">
    <property type="entry name" value="GLUTAMINASE"/>
    <property type="match status" value="1"/>
</dbReference>
<dbReference type="PANTHER" id="PTHR12544:SF29">
    <property type="entry name" value="GLUTAMINASE"/>
    <property type="match status" value="1"/>
</dbReference>
<dbReference type="Pfam" id="PF04960">
    <property type="entry name" value="Glutaminase"/>
    <property type="match status" value="1"/>
</dbReference>
<dbReference type="SUPFAM" id="SSF56601">
    <property type="entry name" value="beta-lactamase/transpeptidase-like"/>
    <property type="match status" value="1"/>
</dbReference>
<sequence>MTTTLSNALLSDILQQIRPLIGQGKVADYIPALAQVPANQLAMAVYTVDGELYQAGMADKRFSIQSISKVLSLTLALTRYDESEIWQRVGKEPSGLPFNSLIQLEMEKGLPRNPFINAGAIVITDMLQSRLSAPKQRMLEVIRALTNTADICYNTVVAKSEMEHLSRNAAIAYLMKSFDNFDNDVITVLETYFHYCSIEMSCVELVRCFSYLANQGICVGSKNQIITPRQARQINALMLTCGMYDGAGEFAFRIGIPGKSGVGGGIIAVVPDAFTVAVWSPELDKSGNSLAGCAALELLANKVGRSIF</sequence>
<proteinExistence type="inferred from homology"/>
<comment type="catalytic activity">
    <reaction evidence="1">
        <text>L-glutamine + H2O = L-glutamate + NH4(+)</text>
        <dbReference type="Rhea" id="RHEA:15889"/>
        <dbReference type="ChEBI" id="CHEBI:15377"/>
        <dbReference type="ChEBI" id="CHEBI:28938"/>
        <dbReference type="ChEBI" id="CHEBI:29985"/>
        <dbReference type="ChEBI" id="CHEBI:58359"/>
        <dbReference type="EC" id="3.5.1.2"/>
    </reaction>
</comment>
<comment type="subunit">
    <text evidence="1">Homotetramer.</text>
</comment>
<comment type="similarity">
    <text evidence="1">Belongs to the glutaminase family.</text>
</comment>
<name>GLSA_PROMH</name>
<accession>B4EUR1</accession>
<organism>
    <name type="scientific">Proteus mirabilis (strain HI4320)</name>
    <dbReference type="NCBI Taxonomy" id="529507"/>
    <lineage>
        <taxon>Bacteria</taxon>
        <taxon>Pseudomonadati</taxon>
        <taxon>Pseudomonadota</taxon>
        <taxon>Gammaproteobacteria</taxon>
        <taxon>Enterobacterales</taxon>
        <taxon>Morganellaceae</taxon>
        <taxon>Proteus</taxon>
    </lineage>
</organism>
<reference key="1">
    <citation type="journal article" date="2008" name="J. Bacteriol.">
        <title>Complete genome sequence of uropathogenic Proteus mirabilis, a master of both adherence and motility.</title>
        <authorList>
            <person name="Pearson M.M."/>
            <person name="Sebaihia M."/>
            <person name="Churcher C."/>
            <person name="Quail M.A."/>
            <person name="Seshasayee A.S."/>
            <person name="Luscombe N.M."/>
            <person name="Abdellah Z."/>
            <person name="Arrosmith C."/>
            <person name="Atkin B."/>
            <person name="Chillingworth T."/>
            <person name="Hauser H."/>
            <person name="Jagels K."/>
            <person name="Moule S."/>
            <person name="Mungall K."/>
            <person name="Norbertczak H."/>
            <person name="Rabbinowitsch E."/>
            <person name="Walker D."/>
            <person name="Whithead S."/>
            <person name="Thomson N.R."/>
            <person name="Rather P.N."/>
            <person name="Parkhill J."/>
            <person name="Mobley H.L.T."/>
        </authorList>
    </citation>
    <scope>NUCLEOTIDE SEQUENCE [LARGE SCALE GENOMIC DNA]</scope>
    <source>
        <strain>HI4320</strain>
    </source>
</reference>
<feature type="chain" id="PRO_1000115700" description="Glutaminase">
    <location>
        <begin position="1"/>
        <end position="308"/>
    </location>
</feature>
<feature type="binding site" evidence="1">
    <location>
        <position position="66"/>
    </location>
    <ligand>
        <name>substrate</name>
    </ligand>
</feature>
<feature type="binding site" evidence="1">
    <location>
        <position position="117"/>
    </location>
    <ligand>
        <name>substrate</name>
    </ligand>
</feature>
<feature type="binding site" evidence="1">
    <location>
        <position position="161"/>
    </location>
    <ligand>
        <name>substrate</name>
    </ligand>
</feature>
<feature type="binding site" evidence="1">
    <location>
        <position position="168"/>
    </location>
    <ligand>
        <name>substrate</name>
    </ligand>
</feature>
<feature type="binding site" evidence="1">
    <location>
        <position position="192"/>
    </location>
    <ligand>
        <name>substrate</name>
    </ligand>
</feature>
<feature type="binding site" evidence="1">
    <location>
        <position position="244"/>
    </location>
    <ligand>
        <name>substrate</name>
    </ligand>
</feature>
<feature type="binding site" evidence="1">
    <location>
        <position position="262"/>
    </location>
    <ligand>
        <name>substrate</name>
    </ligand>
</feature>
<evidence type="ECO:0000255" key="1">
    <source>
        <dbReference type="HAMAP-Rule" id="MF_00313"/>
    </source>
</evidence>
<keyword id="KW-0378">Hydrolase</keyword>
<keyword id="KW-1185">Reference proteome</keyword>
<protein>
    <recommendedName>
        <fullName evidence="1">Glutaminase</fullName>
        <ecNumber evidence="1">3.5.1.2</ecNumber>
    </recommendedName>
</protein>
<gene>
    <name evidence="1" type="primary">glsA</name>
    <name type="ordered locus">PMI0329</name>
</gene>